<gene>
    <name evidence="1" type="primary">rpsS</name>
    <name type="ordered locus">Sden_0174</name>
</gene>
<accession>Q12SV5</accession>
<comment type="function">
    <text evidence="1">Protein S19 forms a complex with S13 that binds strongly to the 16S ribosomal RNA.</text>
</comment>
<comment type="similarity">
    <text evidence="1">Belongs to the universal ribosomal protein uS19 family.</text>
</comment>
<reference key="1">
    <citation type="submission" date="2006-03" db="EMBL/GenBank/DDBJ databases">
        <title>Complete sequence of Shewanella denitrificans OS217.</title>
        <authorList>
            <consortium name="US DOE Joint Genome Institute"/>
            <person name="Copeland A."/>
            <person name="Lucas S."/>
            <person name="Lapidus A."/>
            <person name="Barry K."/>
            <person name="Detter J.C."/>
            <person name="Glavina del Rio T."/>
            <person name="Hammon N."/>
            <person name="Israni S."/>
            <person name="Dalin E."/>
            <person name="Tice H."/>
            <person name="Pitluck S."/>
            <person name="Brettin T."/>
            <person name="Bruce D."/>
            <person name="Han C."/>
            <person name="Tapia R."/>
            <person name="Gilna P."/>
            <person name="Kiss H."/>
            <person name="Schmutz J."/>
            <person name="Larimer F."/>
            <person name="Land M."/>
            <person name="Hauser L."/>
            <person name="Kyrpides N."/>
            <person name="Lykidis A."/>
            <person name="Richardson P."/>
        </authorList>
    </citation>
    <scope>NUCLEOTIDE SEQUENCE [LARGE SCALE GENOMIC DNA]</scope>
    <source>
        <strain>OS217 / ATCC BAA-1090 / DSM 15013</strain>
    </source>
</reference>
<proteinExistence type="inferred from homology"/>
<organism>
    <name type="scientific">Shewanella denitrificans (strain OS217 / ATCC BAA-1090 / DSM 15013)</name>
    <dbReference type="NCBI Taxonomy" id="318161"/>
    <lineage>
        <taxon>Bacteria</taxon>
        <taxon>Pseudomonadati</taxon>
        <taxon>Pseudomonadota</taxon>
        <taxon>Gammaproteobacteria</taxon>
        <taxon>Alteromonadales</taxon>
        <taxon>Shewanellaceae</taxon>
        <taxon>Shewanella</taxon>
    </lineage>
</organism>
<protein>
    <recommendedName>
        <fullName evidence="1">Small ribosomal subunit protein uS19</fullName>
    </recommendedName>
    <alternativeName>
        <fullName evidence="2">30S ribosomal protein S19</fullName>
    </alternativeName>
</protein>
<evidence type="ECO:0000255" key="1">
    <source>
        <dbReference type="HAMAP-Rule" id="MF_00531"/>
    </source>
</evidence>
<evidence type="ECO:0000305" key="2"/>
<keyword id="KW-1185">Reference proteome</keyword>
<keyword id="KW-0687">Ribonucleoprotein</keyword>
<keyword id="KW-0689">Ribosomal protein</keyword>
<keyword id="KW-0694">RNA-binding</keyword>
<keyword id="KW-0699">rRNA-binding</keyword>
<name>RS19_SHEDO</name>
<dbReference type="EMBL" id="CP000302">
    <property type="protein sequence ID" value="ABE53471.1"/>
    <property type="molecule type" value="Genomic_DNA"/>
</dbReference>
<dbReference type="RefSeq" id="WP_006083596.1">
    <property type="nucleotide sequence ID" value="NC_007954.1"/>
</dbReference>
<dbReference type="SMR" id="Q12SV5"/>
<dbReference type="STRING" id="318161.Sden_0174"/>
<dbReference type="GeneID" id="94726190"/>
<dbReference type="KEGG" id="sdn:Sden_0174"/>
<dbReference type="eggNOG" id="COG0185">
    <property type="taxonomic scope" value="Bacteria"/>
</dbReference>
<dbReference type="HOGENOM" id="CLU_144911_0_1_6"/>
<dbReference type="OrthoDB" id="9797833at2"/>
<dbReference type="Proteomes" id="UP000001982">
    <property type="component" value="Chromosome"/>
</dbReference>
<dbReference type="GO" id="GO:0005737">
    <property type="term" value="C:cytoplasm"/>
    <property type="evidence" value="ECO:0007669"/>
    <property type="project" value="UniProtKB-ARBA"/>
</dbReference>
<dbReference type="GO" id="GO:0015935">
    <property type="term" value="C:small ribosomal subunit"/>
    <property type="evidence" value="ECO:0007669"/>
    <property type="project" value="InterPro"/>
</dbReference>
<dbReference type="GO" id="GO:0019843">
    <property type="term" value="F:rRNA binding"/>
    <property type="evidence" value="ECO:0007669"/>
    <property type="project" value="UniProtKB-UniRule"/>
</dbReference>
<dbReference type="GO" id="GO:0003735">
    <property type="term" value="F:structural constituent of ribosome"/>
    <property type="evidence" value="ECO:0007669"/>
    <property type="project" value="InterPro"/>
</dbReference>
<dbReference type="GO" id="GO:0000028">
    <property type="term" value="P:ribosomal small subunit assembly"/>
    <property type="evidence" value="ECO:0007669"/>
    <property type="project" value="TreeGrafter"/>
</dbReference>
<dbReference type="GO" id="GO:0006412">
    <property type="term" value="P:translation"/>
    <property type="evidence" value="ECO:0007669"/>
    <property type="project" value="UniProtKB-UniRule"/>
</dbReference>
<dbReference type="FunFam" id="3.30.860.10:FF:000001">
    <property type="entry name" value="30S ribosomal protein S19"/>
    <property type="match status" value="1"/>
</dbReference>
<dbReference type="Gene3D" id="3.30.860.10">
    <property type="entry name" value="30s Ribosomal Protein S19, Chain A"/>
    <property type="match status" value="1"/>
</dbReference>
<dbReference type="HAMAP" id="MF_00531">
    <property type="entry name" value="Ribosomal_uS19"/>
    <property type="match status" value="1"/>
</dbReference>
<dbReference type="InterPro" id="IPR002222">
    <property type="entry name" value="Ribosomal_uS19"/>
</dbReference>
<dbReference type="InterPro" id="IPR005732">
    <property type="entry name" value="Ribosomal_uS19_bac-type"/>
</dbReference>
<dbReference type="InterPro" id="IPR020934">
    <property type="entry name" value="Ribosomal_uS19_CS"/>
</dbReference>
<dbReference type="InterPro" id="IPR023575">
    <property type="entry name" value="Ribosomal_uS19_SF"/>
</dbReference>
<dbReference type="NCBIfam" id="TIGR01050">
    <property type="entry name" value="rpsS_bact"/>
    <property type="match status" value="1"/>
</dbReference>
<dbReference type="PANTHER" id="PTHR11880">
    <property type="entry name" value="RIBOSOMAL PROTEIN S19P FAMILY MEMBER"/>
    <property type="match status" value="1"/>
</dbReference>
<dbReference type="PANTHER" id="PTHR11880:SF8">
    <property type="entry name" value="SMALL RIBOSOMAL SUBUNIT PROTEIN US19M"/>
    <property type="match status" value="1"/>
</dbReference>
<dbReference type="Pfam" id="PF00203">
    <property type="entry name" value="Ribosomal_S19"/>
    <property type="match status" value="1"/>
</dbReference>
<dbReference type="PIRSF" id="PIRSF002144">
    <property type="entry name" value="Ribosomal_S19"/>
    <property type="match status" value="1"/>
</dbReference>
<dbReference type="PRINTS" id="PR00975">
    <property type="entry name" value="RIBOSOMALS19"/>
</dbReference>
<dbReference type="SUPFAM" id="SSF54570">
    <property type="entry name" value="Ribosomal protein S19"/>
    <property type="match status" value="1"/>
</dbReference>
<dbReference type="PROSITE" id="PS00323">
    <property type="entry name" value="RIBOSOMAL_S19"/>
    <property type="match status" value="1"/>
</dbReference>
<feature type="chain" id="PRO_0000265427" description="Small ribosomal subunit protein uS19">
    <location>
        <begin position="1"/>
        <end position="92"/>
    </location>
</feature>
<sequence length="92" mass="10472">MPRSLKKGPFIDLHLLKKVEKAMEAGDKKPIKTWSRRSMIIPNMIGLTIAVHNGRQHVPVFVTDEMIGHKLGEFSPTRTYRGHAADKKAKKR</sequence>